<accession>A7H3L9</accession>
<name>F16PA_CAMJD</name>
<evidence type="ECO:0000255" key="1">
    <source>
        <dbReference type="HAMAP-Rule" id="MF_01855"/>
    </source>
</evidence>
<proteinExistence type="inferred from homology"/>
<sequence length="280" mass="31500">MQEVISYIQKAVLEISNALKFPDTSYSQNQNFTGDTQLKFDVLSDEIITKTLSQCSSIKAIISEEKDEILTLNEKAKLIVAYDPLDGSSLMDVNFAIGSIFAIYEEKASAKKLRAALYSMYGARLELVICKEQPKLYRLNANNEFIFIKDLKINEKGKINATGGTQKFWEEKHAKFIKSLFDEGYRLRYSGAMVSDINQILLKGGGIFSYPATQDAPNGKLRAFFEVFPLAFIIEKAGGKTTNGKNHSLLELEFDKIHATTPCFFGSKYEISKLLKAYNE</sequence>
<keyword id="KW-0119">Carbohydrate metabolism</keyword>
<keyword id="KW-0963">Cytoplasm</keyword>
<keyword id="KW-0378">Hydrolase</keyword>
<keyword id="KW-0460">Magnesium</keyword>
<keyword id="KW-0479">Metal-binding</keyword>
<gene>
    <name evidence="1" type="primary">fbp</name>
    <name type="ordered locus">JJD26997_0990</name>
</gene>
<dbReference type="EC" id="3.1.3.11" evidence="1"/>
<dbReference type="EMBL" id="CP000768">
    <property type="protein sequence ID" value="ABS44660.1"/>
    <property type="molecule type" value="Genomic_DNA"/>
</dbReference>
<dbReference type="SMR" id="A7H3L9"/>
<dbReference type="KEGG" id="cjd:JJD26997_0990"/>
<dbReference type="HOGENOM" id="CLU_039977_0_0_7"/>
<dbReference type="UniPathway" id="UPA00138"/>
<dbReference type="Proteomes" id="UP000002302">
    <property type="component" value="Chromosome"/>
</dbReference>
<dbReference type="GO" id="GO:0005829">
    <property type="term" value="C:cytosol"/>
    <property type="evidence" value="ECO:0007669"/>
    <property type="project" value="TreeGrafter"/>
</dbReference>
<dbReference type="GO" id="GO:0042132">
    <property type="term" value="F:fructose 1,6-bisphosphate 1-phosphatase activity"/>
    <property type="evidence" value="ECO:0007669"/>
    <property type="project" value="UniProtKB-UniRule"/>
</dbReference>
<dbReference type="GO" id="GO:0000287">
    <property type="term" value="F:magnesium ion binding"/>
    <property type="evidence" value="ECO:0007669"/>
    <property type="project" value="UniProtKB-UniRule"/>
</dbReference>
<dbReference type="GO" id="GO:0030388">
    <property type="term" value="P:fructose 1,6-bisphosphate metabolic process"/>
    <property type="evidence" value="ECO:0007669"/>
    <property type="project" value="TreeGrafter"/>
</dbReference>
<dbReference type="GO" id="GO:0006002">
    <property type="term" value="P:fructose 6-phosphate metabolic process"/>
    <property type="evidence" value="ECO:0007669"/>
    <property type="project" value="TreeGrafter"/>
</dbReference>
<dbReference type="GO" id="GO:0006000">
    <property type="term" value="P:fructose metabolic process"/>
    <property type="evidence" value="ECO:0007669"/>
    <property type="project" value="TreeGrafter"/>
</dbReference>
<dbReference type="GO" id="GO:0006094">
    <property type="term" value="P:gluconeogenesis"/>
    <property type="evidence" value="ECO:0007669"/>
    <property type="project" value="UniProtKB-UniRule"/>
</dbReference>
<dbReference type="GO" id="GO:0005986">
    <property type="term" value="P:sucrose biosynthetic process"/>
    <property type="evidence" value="ECO:0007669"/>
    <property type="project" value="TreeGrafter"/>
</dbReference>
<dbReference type="Gene3D" id="3.40.190.80">
    <property type="match status" value="1"/>
</dbReference>
<dbReference type="Gene3D" id="3.30.540.10">
    <property type="entry name" value="Fructose-1,6-Bisphosphatase, subunit A, domain 1"/>
    <property type="match status" value="1"/>
</dbReference>
<dbReference type="HAMAP" id="MF_01855">
    <property type="entry name" value="FBPase_class1"/>
    <property type="match status" value="1"/>
</dbReference>
<dbReference type="InterPro" id="IPR044015">
    <property type="entry name" value="FBPase_C_dom"/>
</dbReference>
<dbReference type="InterPro" id="IPR000146">
    <property type="entry name" value="FBPase_class-1"/>
</dbReference>
<dbReference type="InterPro" id="IPR033391">
    <property type="entry name" value="FBPase_N"/>
</dbReference>
<dbReference type="InterPro" id="IPR028343">
    <property type="entry name" value="FBPtase"/>
</dbReference>
<dbReference type="InterPro" id="IPR023079">
    <property type="entry name" value="SBPase"/>
</dbReference>
<dbReference type="NCBIfam" id="NF006782">
    <property type="entry name" value="PRK09293.2-3"/>
    <property type="match status" value="1"/>
</dbReference>
<dbReference type="PANTHER" id="PTHR11556">
    <property type="entry name" value="FRUCTOSE-1,6-BISPHOSPHATASE-RELATED"/>
    <property type="match status" value="1"/>
</dbReference>
<dbReference type="PANTHER" id="PTHR11556:SF35">
    <property type="entry name" value="SEDOHEPTULOSE-1,7-BISPHOSPHATASE, CHLOROPLASTIC"/>
    <property type="match status" value="1"/>
</dbReference>
<dbReference type="Pfam" id="PF00316">
    <property type="entry name" value="FBPase"/>
    <property type="match status" value="1"/>
</dbReference>
<dbReference type="Pfam" id="PF18913">
    <property type="entry name" value="FBPase_C"/>
    <property type="match status" value="1"/>
</dbReference>
<dbReference type="PIRSF" id="PIRSF500210">
    <property type="entry name" value="FBPtase"/>
    <property type="match status" value="1"/>
</dbReference>
<dbReference type="PIRSF" id="PIRSF000904">
    <property type="entry name" value="FBPtase_SBPase"/>
    <property type="match status" value="1"/>
</dbReference>
<dbReference type="PRINTS" id="PR01958">
    <property type="entry name" value="S17BPHPHTASE"/>
</dbReference>
<dbReference type="SUPFAM" id="SSF56655">
    <property type="entry name" value="Carbohydrate phosphatase"/>
    <property type="match status" value="1"/>
</dbReference>
<reference key="1">
    <citation type="submission" date="2007-07" db="EMBL/GenBank/DDBJ databases">
        <title>Complete genome sequence of Campylobacter jejuni subsp doylei 269.97 isolated from human blood.</title>
        <authorList>
            <person name="Fouts D.E."/>
            <person name="Mongodin E.F."/>
            <person name="Puiu D."/>
            <person name="Sebastian Y."/>
            <person name="Miller W.G."/>
            <person name="Mandrell R.E."/>
            <person name="Lastovica A.J."/>
            <person name="Nelson K.E."/>
        </authorList>
    </citation>
    <scope>NUCLEOTIDE SEQUENCE [LARGE SCALE GENOMIC DNA]</scope>
    <source>
        <strain>ATCC BAA-1458 / RM4099 / 269.97</strain>
    </source>
</reference>
<organism>
    <name type="scientific">Campylobacter jejuni subsp. doylei (strain ATCC BAA-1458 / RM4099 / 269.97)</name>
    <dbReference type="NCBI Taxonomy" id="360109"/>
    <lineage>
        <taxon>Bacteria</taxon>
        <taxon>Pseudomonadati</taxon>
        <taxon>Campylobacterota</taxon>
        <taxon>Epsilonproteobacteria</taxon>
        <taxon>Campylobacterales</taxon>
        <taxon>Campylobacteraceae</taxon>
        <taxon>Campylobacter</taxon>
    </lineage>
</organism>
<feature type="chain" id="PRO_0000364514" description="Fructose-1,6-bisphosphatase class 1">
    <location>
        <begin position="1"/>
        <end position="280"/>
    </location>
</feature>
<feature type="binding site" evidence="1">
    <location>
        <position position="64"/>
    </location>
    <ligand>
        <name>Mg(2+)</name>
        <dbReference type="ChEBI" id="CHEBI:18420"/>
        <label>1</label>
    </ligand>
</feature>
<feature type="binding site" evidence="1">
    <location>
        <position position="83"/>
    </location>
    <ligand>
        <name>Mg(2+)</name>
        <dbReference type="ChEBI" id="CHEBI:18420"/>
        <label>1</label>
    </ligand>
</feature>
<feature type="binding site" evidence="1">
    <location>
        <position position="83"/>
    </location>
    <ligand>
        <name>Mg(2+)</name>
        <dbReference type="ChEBI" id="CHEBI:18420"/>
        <label>2</label>
    </ligand>
</feature>
<feature type="binding site" evidence="1">
    <location>
        <position position="85"/>
    </location>
    <ligand>
        <name>Mg(2+)</name>
        <dbReference type="ChEBI" id="CHEBI:18420"/>
        <label>1</label>
    </ligand>
</feature>
<feature type="binding site" evidence="1">
    <location>
        <begin position="86"/>
        <end position="89"/>
    </location>
    <ligand>
        <name>substrate</name>
    </ligand>
</feature>
<feature type="binding site" evidence="1">
    <location>
        <position position="86"/>
    </location>
    <ligand>
        <name>Mg(2+)</name>
        <dbReference type="ChEBI" id="CHEBI:18420"/>
        <label>2</label>
    </ligand>
</feature>
<feature type="binding site" evidence="1">
    <location>
        <position position="189"/>
    </location>
    <ligand>
        <name>substrate</name>
    </ligand>
</feature>
<feature type="binding site" evidence="1">
    <location>
        <position position="220"/>
    </location>
    <ligand>
        <name>substrate</name>
    </ligand>
</feature>
<feature type="binding site" evidence="1">
    <location>
        <position position="226"/>
    </location>
    <ligand>
        <name>Mg(2+)</name>
        <dbReference type="ChEBI" id="CHEBI:18420"/>
        <label>2</label>
    </ligand>
</feature>
<comment type="catalytic activity">
    <reaction evidence="1">
        <text>beta-D-fructose 1,6-bisphosphate + H2O = beta-D-fructose 6-phosphate + phosphate</text>
        <dbReference type="Rhea" id="RHEA:11064"/>
        <dbReference type="ChEBI" id="CHEBI:15377"/>
        <dbReference type="ChEBI" id="CHEBI:32966"/>
        <dbReference type="ChEBI" id="CHEBI:43474"/>
        <dbReference type="ChEBI" id="CHEBI:57634"/>
        <dbReference type="EC" id="3.1.3.11"/>
    </reaction>
</comment>
<comment type="cofactor">
    <cofactor evidence="1">
        <name>Mg(2+)</name>
        <dbReference type="ChEBI" id="CHEBI:18420"/>
    </cofactor>
    <text evidence="1">Binds 2 magnesium ions per subunit.</text>
</comment>
<comment type="pathway">
    <text evidence="1">Carbohydrate biosynthesis; gluconeogenesis.</text>
</comment>
<comment type="subunit">
    <text evidence="1">Homotetramer.</text>
</comment>
<comment type="subcellular location">
    <subcellularLocation>
        <location evidence="1">Cytoplasm</location>
    </subcellularLocation>
</comment>
<comment type="similarity">
    <text evidence="1">Belongs to the FBPase class 1 family.</text>
</comment>
<protein>
    <recommendedName>
        <fullName evidence="1">Fructose-1,6-bisphosphatase class 1</fullName>
        <shortName evidence="1">FBPase class 1</shortName>
        <ecNumber evidence="1">3.1.3.11</ecNumber>
    </recommendedName>
    <alternativeName>
        <fullName evidence="1">D-fructose-1,6-bisphosphate 1-phosphohydrolase class 1</fullName>
    </alternativeName>
</protein>